<sequence>MIAEIVSIGDELLKGGKVNTNASFIAAALGGIGVPVIRIVACSDDEDQIITVLSESLSRTDLVLVTGGLGPTRDDRTKKAVMRLLQRSVVESEEAFHMLASWFTARGRMLPDTLRDQATIIEGSVLVPNSVGTAAGMIISCGERFGNSSLVLMPGVPSEMQEMMRKTVIPFFAGQSTTAILHTPVKTVGIGESALADLIAAEEDALPEGTTLAYLPHTAGVDLVVSTVGSITEVVERDNRRVVDAILSRAGRFIYATGDTTLEETVGRMLAENSLSIAVAESCTGGLLASRLTDVPGSSAYFQQGIISYSNDAKVQLLGVDRMTLEAFGAVSEPVAKEMARGVLERSGADIAVSTTGIAGPSGGSGDKPVGTLCIGIAGKKSDGSIAFRTGTFRMAGTRAQNKQRFSEAALREAWTYLQEVVGPVRVAG</sequence>
<feature type="chain" id="PRO_1000100307" description="CinA-like protein">
    <location>
        <begin position="1"/>
        <end position="429"/>
    </location>
</feature>
<comment type="similarity">
    <text evidence="1">Belongs to the CinA family.</text>
</comment>
<proteinExistence type="inferred from homology"/>
<reference key="1">
    <citation type="submission" date="2008-05" db="EMBL/GenBank/DDBJ databases">
        <title>Complete sequence of Chlorobium limicola DSM 245.</title>
        <authorList>
            <consortium name="US DOE Joint Genome Institute"/>
            <person name="Lucas S."/>
            <person name="Copeland A."/>
            <person name="Lapidus A."/>
            <person name="Glavina del Rio T."/>
            <person name="Dalin E."/>
            <person name="Tice H."/>
            <person name="Bruce D."/>
            <person name="Goodwin L."/>
            <person name="Pitluck S."/>
            <person name="Schmutz J."/>
            <person name="Larimer F."/>
            <person name="Land M."/>
            <person name="Hauser L."/>
            <person name="Kyrpides N."/>
            <person name="Ovchinnikova G."/>
            <person name="Zhao F."/>
            <person name="Li T."/>
            <person name="Liu Z."/>
            <person name="Overmann J."/>
            <person name="Bryant D.A."/>
            <person name="Richardson P."/>
        </authorList>
    </citation>
    <scope>NUCLEOTIDE SEQUENCE [LARGE SCALE GENOMIC DNA]</scope>
    <source>
        <strain>DSM 245 / NBRC 103803 / 6330</strain>
    </source>
</reference>
<gene>
    <name type="ordered locus">Clim_2329</name>
</gene>
<name>CINAL_CHLL2</name>
<accession>B3EHJ0</accession>
<evidence type="ECO:0000255" key="1">
    <source>
        <dbReference type="HAMAP-Rule" id="MF_00226"/>
    </source>
</evidence>
<organism>
    <name type="scientific">Chlorobium limicola (strain DSM 245 / NBRC 103803 / 6330)</name>
    <dbReference type="NCBI Taxonomy" id="290315"/>
    <lineage>
        <taxon>Bacteria</taxon>
        <taxon>Pseudomonadati</taxon>
        <taxon>Chlorobiota</taxon>
        <taxon>Chlorobiia</taxon>
        <taxon>Chlorobiales</taxon>
        <taxon>Chlorobiaceae</taxon>
        <taxon>Chlorobium/Pelodictyon group</taxon>
        <taxon>Chlorobium</taxon>
    </lineage>
</organism>
<protein>
    <recommendedName>
        <fullName evidence="1">CinA-like protein</fullName>
    </recommendedName>
</protein>
<dbReference type="EMBL" id="CP001097">
    <property type="protein sequence ID" value="ACD91352.1"/>
    <property type="molecule type" value="Genomic_DNA"/>
</dbReference>
<dbReference type="RefSeq" id="WP_012467217.1">
    <property type="nucleotide sequence ID" value="NC_010803.1"/>
</dbReference>
<dbReference type="SMR" id="B3EHJ0"/>
<dbReference type="STRING" id="290315.Clim_2329"/>
<dbReference type="KEGG" id="cli:Clim_2329"/>
<dbReference type="eggNOG" id="COG1058">
    <property type="taxonomic scope" value="Bacteria"/>
</dbReference>
<dbReference type="eggNOG" id="COG1546">
    <property type="taxonomic scope" value="Bacteria"/>
</dbReference>
<dbReference type="HOGENOM" id="CLU_030805_9_2_10"/>
<dbReference type="OrthoDB" id="9801454at2"/>
<dbReference type="Proteomes" id="UP000008841">
    <property type="component" value="Chromosome"/>
</dbReference>
<dbReference type="CDD" id="cd00885">
    <property type="entry name" value="cinA"/>
    <property type="match status" value="1"/>
</dbReference>
<dbReference type="Gene3D" id="3.90.950.20">
    <property type="entry name" value="CinA-like"/>
    <property type="match status" value="1"/>
</dbReference>
<dbReference type="Gene3D" id="3.40.980.10">
    <property type="entry name" value="MoaB/Mog-like domain"/>
    <property type="match status" value="1"/>
</dbReference>
<dbReference type="HAMAP" id="MF_00226_B">
    <property type="entry name" value="CinA_B"/>
    <property type="match status" value="1"/>
</dbReference>
<dbReference type="InterPro" id="IPR050101">
    <property type="entry name" value="CinA"/>
</dbReference>
<dbReference type="InterPro" id="IPR036653">
    <property type="entry name" value="CinA-like_C"/>
</dbReference>
<dbReference type="InterPro" id="IPR008136">
    <property type="entry name" value="CinA_C"/>
</dbReference>
<dbReference type="InterPro" id="IPR041424">
    <property type="entry name" value="CinA_KH"/>
</dbReference>
<dbReference type="InterPro" id="IPR008135">
    <property type="entry name" value="Competence-induced_CinA"/>
</dbReference>
<dbReference type="InterPro" id="IPR036425">
    <property type="entry name" value="MoaB/Mog-like_dom_sf"/>
</dbReference>
<dbReference type="InterPro" id="IPR001453">
    <property type="entry name" value="MoaB/Mog_dom"/>
</dbReference>
<dbReference type="NCBIfam" id="TIGR00200">
    <property type="entry name" value="cinA_nterm"/>
    <property type="match status" value="1"/>
</dbReference>
<dbReference type="NCBIfam" id="TIGR00177">
    <property type="entry name" value="molyb_syn"/>
    <property type="match status" value="1"/>
</dbReference>
<dbReference type="NCBIfam" id="TIGR00199">
    <property type="entry name" value="PncC_domain"/>
    <property type="match status" value="1"/>
</dbReference>
<dbReference type="NCBIfam" id="NF001813">
    <property type="entry name" value="PRK00549.1"/>
    <property type="match status" value="1"/>
</dbReference>
<dbReference type="PANTHER" id="PTHR13939">
    <property type="entry name" value="NICOTINAMIDE-NUCLEOTIDE AMIDOHYDROLASE PNCC"/>
    <property type="match status" value="1"/>
</dbReference>
<dbReference type="PANTHER" id="PTHR13939:SF0">
    <property type="entry name" value="NMN AMIDOHYDROLASE-LIKE PROTEIN YFAY"/>
    <property type="match status" value="1"/>
</dbReference>
<dbReference type="Pfam" id="PF02464">
    <property type="entry name" value="CinA"/>
    <property type="match status" value="1"/>
</dbReference>
<dbReference type="Pfam" id="PF18146">
    <property type="entry name" value="CinA_KH"/>
    <property type="match status" value="1"/>
</dbReference>
<dbReference type="Pfam" id="PF00994">
    <property type="entry name" value="MoCF_biosynth"/>
    <property type="match status" value="1"/>
</dbReference>
<dbReference type="PIRSF" id="PIRSF006728">
    <property type="entry name" value="CinA"/>
    <property type="match status" value="1"/>
</dbReference>
<dbReference type="SMART" id="SM00852">
    <property type="entry name" value="MoCF_biosynth"/>
    <property type="match status" value="1"/>
</dbReference>
<dbReference type="SUPFAM" id="SSF142433">
    <property type="entry name" value="CinA-like"/>
    <property type="match status" value="1"/>
</dbReference>
<dbReference type="SUPFAM" id="SSF53218">
    <property type="entry name" value="Molybdenum cofactor biosynthesis proteins"/>
    <property type="match status" value="1"/>
</dbReference>